<reference key="1">
    <citation type="journal article" date="2009" name="Plant J.">
        <title>Characterization of genes in the ASYMMETRIC LEAVES2/LATERAL ORGAN BOUNDARIES (AS2/LOB) family in Arabidopsis thaliana, and functional and molecular comparisons between AS2 and other family members.</title>
        <authorList>
            <person name="Matsumura Y."/>
            <person name="Iwakawa H."/>
            <person name="Machida Y."/>
            <person name="Machida C."/>
        </authorList>
    </citation>
    <scope>NUCLEOTIDE SEQUENCE [MRNA]</scope>
    <source>
        <strain>cv. Columbia</strain>
    </source>
</reference>
<reference key="2">
    <citation type="journal article" date="2000" name="Nature">
        <title>Sequence and analysis of chromosome 3 of the plant Arabidopsis thaliana.</title>
        <authorList>
            <person name="Salanoubat M."/>
            <person name="Lemcke K."/>
            <person name="Rieger M."/>
            <person name="Ansorge W."/>
            <person name="Unseld M."/>
            <person name="Fartmann B."/>
            <person name="Valle G."/>
            <person name="Bloecker H."/>
            <person name="Perez-Alonso M."/>
            <person name="Obermaier B."/>
            <person name="Delseny M."/>
            <person name="Boutry M."/>
            <person name="Grivell L.A."/>
            <person name="Mache R."/>
            <person name="Puigdomenech P."/>
            <person name="De Simone V."/>
            <person name="Choisne N."/>
            <person name="Artiguenave F."/>
            <person name="Robert C."/>
            <person name="Brottier P."/>
            <person name="Wincker P."/>
            <person name="Cattolico L."/>
            <person name="Weissenbach J."/>
            <person name="Saurin W."/>
            <person name="Quetier F."/>
            <person name="Schaefer M."/>
            <person name="Mueller-Auer S."/>
            <person name="Gabel C."/>
            <person name="Fuchs M."/>
            <person name="Benes V."/>
            <person name="Wurmbach E."/>
            <person name="Drzonek H."/>
            <person name="Erfle H."/>
            <person name="Jordan N."/>
            <person name="Bangert S."/>
            <person name="Wiedelmann R."/>
            <person name="Kranz H."/>
            <person name="Voss H."/>
            <person name="Holland R."/>
            <person name="Brandt P."/>
            <person name="Nyakatura G."/>
            <person name="Vezzi A."/>
            <person name="D'Angelo M."/>
            <person name="Pallavicini A."/>
            <person name="Toppo S."/>
            <person name="Simionati B."/>
            <person name="Conrad A."/>
            <person name="Hornischer K."/>
            <person name="Kauer G."/>
            <person name="Loehnert T.-H."/>
            <person name="Nordsiek G."/>
            <person name="Reichelt J."/>
            <person name="Scharfe M."/>
            <person name="Schoen O."/>
            <person name="Bargues M."/>
            <person name="Terol J."/>
            <person name="Climent J."/>
            <person name="Navarro P."/>
            <person name="Collado C."/>
            <person name="Perez-Perez A."/>
            <person name="Ottenwaelder B."/>
            <person name="Duchemin D."/>
            <person name="Cooke R."/>
            <person name="Laudie M."/>
            <person name="Berger-Llauro C."/>
            <person name="Purnelle B."/>
            <person name="Masuy D."/>
            <person name="de Haan M."/>
            <person name="Maarse A.C."/>
            <person name="Alcaraz J.-P."/>
            <person name="Cottet A."/>
            <person name="Casacuberta E."/>
            <person name="Monfort A."/>
            <person name="Argiriou A."/>
            <person name="Flores M."/>
            <person name="Liguori R."/>
            <person name="Vitale D."/>
            <person name="Mannhaupt G."/>
            <person name="Haase D."/>
            <person name="Schoof H."/>
            <person name="Rudd S."/>
            <person name="Zaccaria P."/>
            <person name="Mewes H.-W."/>
            <person name="Mayer K.F.X."/>
            <person name="Kaul S."/>
            <person name="Town C.D."/>
            <person name="Koo H.L."/>
            <person name="Tallon L.J."/>
            <person name="Jenkins J."/>
            <person name="Rooney T."/>
            <person name="Rizzo M."/>
            <person name="Walts A."/>
            <person name="Utterback T."/>
            <person name="Fujii C.Y."/>
            <person name="Shea T.P."/>
            <person name="Creasy T.H."/>
            <person name="Haas B."/>
            <person name="Maiti R."/>
            <person name="Wu D."/>
            <person name="Peterson J."/>
            <person name="Van Aken S."/>
            <person name="Pai G."/>
            <person name="Militscher J."/>
            <person name="Sellers P."/>
            <person name="Gill J.E."/>
            <person name="Feldblyum T.V."/>
            <person name="Preuss D."/>
            <person name="Lin X."/>
            <person name="Nierman W.C."/>
            <person name="Salzberg S.L."/>
            <person name="White O."/>
            <person name="Venter J.C."/>
            <person name="Fraser C.M."/>
            <person name="Kaneko T."/>
            <person name="Nakamura Y."/>
            <person name="Sato S."/>
            <person name="Kato T."/>
            <person name="Asamizu E."/>
            <person name="Sasamoto S."/>
            <person name="Kimura T."/>
            <person name="Idesawa K."/>
            <person name="Kawashima K."/>
            <person name="Kishida Y."/>
            <person name="Kiyokawa C."/>
            <person name="Kohara M."/>
            <person name="Matsumoto M."/>
            <person name="Matsuno A."/>
            <person name="Muraki A."/>
            <person name="Nakayama S."/>
            <person name="Nakazaki N."/>
            <person name="Shinpo S."/>
            <person name="Takeuchi C."/>
            <person name="Wada T."/>
            <person name="Watanabe A."/>
            <person name="Yamada M."/>
            <person name="Yasuda M."/>
            <person name="Tabata S."/>
        </authorList>
    </citation>
    <scope>NUCLEOTIDE SEQUENCE [LARGE SCALE GENOMIC DNA]</scope>
    <source>
        <strain>cv. Columbia</strain>
    </source>
</reference>
<reference key="3">
    <citation type="journal article" date="2017" name="Plant J.">
        <title>Araport11: a complete reannotation of the Arabidopsis thaliana reference genome.</title>
        <authorList>
            <person name="Cheng C.Y."/>
            <person name="Krishnakumar V."/>
            <person name="Chan A.P."/>
            <person name="Thibaud-Nissen F."/>
            <person name="Schobel S."/>
            <person name="Town C.D."/>
        </authorList>
    </citation>
    <scope>GENOME REANNOTATION</scope>
    <source>
        <strain>cv. Columbia</strain>
    </source>
</reference>
<reference key="4">
    <citation type="journal article" date="2003" name="Science">
        <title>Empirical analysis of transcriptional activity in the Arabidopsis genome.</title>
        <authorList>
            <person name="Yamada K."/>
            <person name="Lim J."/>
            <person name="Dale J.M."/>
            <person name="Chen H."/>
            <person name="Shinn P."/>
            <person name="Palm C.J."/>
            <person name="Southwick A.M."/>
            <person name="Wu H.C."/>
            <person name="Kim C.J."/>
            <person name="Nguyen M."/>
            <person name="Pham P.K."/>
            <person name="Cheuk R.F."/>
            <person name="Karlin-Newmann G."/>
            <person name="Liu S.X."/>
            <person name="Lam B."/>
            <person name="Sakano H."/>
            <person name="Wu T."/>
            <person name="Yu G."/>
            <person name="Miranda M."/>
            <person name="Quach H.L."/>
            <person name="Tripp M."/>
            <person name="Chang C.H."/>
            <person name="Lee J.M."/>
            <person name="Toriumi M.J."/>
            <person name="Chan M.M."/>
            <person name="Tang C.C."/>
            <person name="Onodera C.S."/>
            <person name="Deng J.M."/>
            <person name="Akiyama K."/>
            <person name="Ansari Y."/>
            <person name="Arakawa T."/>
            <person name="Banh J."/>
            <person name="Banno F."/>
            <person name="Bowser L."/>
            <person name="Brooks S.Y."/>
            <person name="Carninci P."/>
            <person name="Chao Q."/>
            <person name="Choy N."/>
            <person name="Enju A."/>
            <person name="Goldsmith A.D."/>
            <person name="Gurjal M."/>
            <person name="Hansen N.F."/>
            <person name="Hayashizaki Y."/>
            <person name="Johnson-Hopson C."/>
            <person name="Hsuan V.W."/>
            <person name="Iida K."/>
            <person name="Karnes M."/>
            <person name="Khan S."/>
            <person name="Koesema E."/>
            <person name="Ishida J."/>
            <person name="Jiang P.X."/>
            <person name="Jones T."/>
            <person name="Kawai J."/>
            <person name="Kamiya A."/>
            <person name="Meyers C."/>
            <person name="Nakajima M."/>
            <person name="Narusaka M."/>
            <person name="Seki M."/>
            <person name="Sakurai T."/>
            <person name="Satou M."/>
            <person name="Tamse R."/>
            <person name="Vaysberg M."/>
            <person name="Wallender E.K."/>
            <person name="Wong C."/>
            <person name="Yamamura Y."/>
            <person name="Yuan S."/>
            <person name="Shinozaki K."/>
            <person name="Davis R.W."/>
            <person name="Theologis A."/>
            <person name="Ecker J.R."/>
        </authorList>
    </citation>
    <scope>NUCLEOTIDE SEQUENCE [LARGE SCALE MRNA]</scope>
    <source>
        <strain>cv. Columbia</strain>
    </source>
</reference>
<reference key="5">
    <citation type="submission" date="2002-03" db="EMBL/GenBank/DDBJ databases">
        <title>Full-length cDNA from Arabidopsis thaliana.</title>
        <authorList>
            <person name="Brover V.V."/>
            <person name="Troukhan M.E."/>
            <person name="Alexandrov N.A."/>
            <person name="Lu Y.-P."/>
            <person name="Flavell R.B."/>
            <person name="Feldmann K.A."/>
        </authorList>
    </citation>
    <scope>NUCLEOTIDE SEQUENCE [LARGE SCALE MRNA]</scope>
</reference>
<reference key="6">
    <citation type="journal article" date="2002" name="Plant Physiol.">
        <title>The LATERAL ORGAN BOUNDARIES gene defines a novel, plant-specific gene family.</title>
        <authorList>
            <person name="Shuai B."/>
            <person name="Reynaga-Pena C.G."/>
            <person name="Springer P.S."/>
        </authorList>
    </citation>
    <scope>TISSUE SPECIFICITY</scope>
    <scope>GENE FAMILY</scope>
    <scope>NOMENCLATURE</scope>
</reference>
<reference key="7">
    <citation type="journal article" date="2002" name="Plant Cell Physiol.">
        <title>The ASYMMETRIC LEAVES2 gene of Arabidopsis thaliana, required for formation of a symmetric flat leaf lamina, encodes a member of a novel family of proteins characterized by cysteine repeats and a leucine zipper.</title>
        <authorList>
            <person name="Iwakawa H."/>
            <person name="Ueno Y."/>
            <person name="Semiarti E."/>
            <person name="Onouchi H."/>
            <person name="Kojima S."/>
            <person name="Tsukaya H."/>
            <person name="Hasebe M."/>
            <person name="Soma T."/>
            <person name="Ikezaki M."/>
            <person name="Machida C."/>
            <person name="Machida Y."/>
        </authorList>
    </citation>
    <scope>GENE FAMILY</scope>
    <scope>NOMENCLATURE</scope>
</reference>
<feature type="chain" id="PRO_0000132288" description="LOB domain-containing protein 38">
    <location>
        <begin position="1"/>
        <end position="247"/>
    </location>
</feature>
<feature type="domain" description="LOB" evidence="1">
    <location>
        <begin position="1"/>
        <end position="107"/>
    </location>
</feature>
<feature type="region of interest" description="Disordered" evidence="2">
    <location>
        <begin position="157"/>
        <end position="184"/>
    </location>
</feature>
<feature type="compositionally biased region" description="Low complexity" evidence="2">
    <location>
        <begin position="157"/>
        <end position="170"/>
    </location>
</feature>
<feature type="sequence conflict" description="In Ref. 5; AAM62979." evidence="4" ref="5">
    <original>R</original>
    <variation>Q</variation>
    <location>
        <position position="149"/>
    </location>
</feature>
<comment type="interaction">
    <interactant intactId="EBI-15193585">
        <id>Q9SN23</id>
    </interactant>
    <interactant intactId="EBI-15191535">
        <id>O80748</id>
        <label>BBX26</label>
    </interactant>
    <organismsDiffer>false</organismsDiffer>
    <experiments>3</experiments>
</comment>
<comment type="interaction">
    <interactant intactId="EBI-15193585">
        <id>Q9SN23</id>
    </interactant>
    <interactant intactId="EBI-4424563">
        <id>Q93Z00</id>
        <label>TCP14</label>
    </interactant>
    <organismsDiffer>false</organismsDiffer>
    <experiments>3</experiments>
</comment>
<comment type="interaction">
    <interactant intactId="EBI-15193585">
        <id>Q9SN23</id>
    </interactant>
    <interactant intactId="EBI-4426144">
        <id>Q9C9L2</id>
        <label>TCP15</label>
    </interactant>
    <organismsDiffer>false</organismsDiffer>
    <experiments>3</experiments>
</comment>
<comment type="interaction">
    <interactant intactId="EBI-15193585">
        <id>Q9SN23</id>
    </interactant>
    <interactant intactId="EBI-15192325">
        <id>Q8LPR5</id>
        <label>TCP4</label>
    </interactant>
    <organismsDiffer>false</organismsDiffer>
    <experiments>3</experiments>
</comment>
<comment type="tissue specificity">
    <text evidence="3">Expressed in young shoots, roots, stems, leaves and flowers.</text>
</comment>
<comment type="similarity">
    <text evidence="4">Belongs to the LOB domain-containing protein family.</text>
</comment>
<gene>
    <name type="primary">LBD38</name>
    <name type="synonym">ASL40</name>
    <name type="ordered locus">At3g49940</name>
    <name type="ORF">F3A4.20</name>
</gene>
<proteinExistence type="evidence at protein level"/>
<accession>Q9SN23</accession>
<accession>B7XG94</accession>
<accession>Q8LDW4</accession>
<dbReference type="EMBL" id="AB473873">
    <property type="protein sequence ID" value="BAH10584.1"/>
    <property type="molecule type" value="mRNA"/>
</dbReference>
<dbReference type="EMBL" id="AL132978">
    <property type="protein sequence ID" value="CAB62102.1"/>
    <property type="molecule type" value="Genomic_DNA"/>
</dbReference>
<dbReference type="EMBL" id="CP002686">
    <property type="protein sequence ID" value="AEE78609.1"/>
    <property type="molecule type" value="Genomic_DNA"/>
</dbReference>
<dbReference type="EMBL" id="BT002449">
    <property type="protein sequence ID" value="AAO00809.1"/>
    <property type="molecule type" value="mRNA"/>
</dbReference>
<dbReference type="EMBL" id="BT006287">
    <property type="protein sequence ID" value="AAP13395.1"/>
    <property type="molecule type" value="mRNA"/>
</dbReference>
<dbReference type="EMBL" id="AY085761">
    <property type="protein sequence ID" value="AAM62979.1"/>
    <property type="molecule type" value="mRNA"/>
</dbReference>
<dbReference type="PIR" id="T45847">
    <property type="entry name" value="T45847"/>
</dbReference>
<dbReference type="RefSeq" id="NP_190563.1">
    <property type="nucleotide sequence ID" value="NM_114854.2"/>
</dbReference>
<dbReference type="BioGRID" id="9474">
    <property type="interactions" value="24"/>
</dbReference>
<dbReference type="FunCoup" id="Q9SN23">
    <property type="interactions" value="149"/>
</dbReference>
<dbReference type="IntAct" id="Q9SN23">
    <property type="interactions" value="23"/>
</dbReference>
<dbReference type="STRING" id="3702.Q9SN23"/>
<dbReference type="iPTMnet" id="Q9SN23"/>
<dbReference type="PaxDb" id="3702-AT3G49940.1"/>
<dbReference type="ProteomicsDB" id="237081"/>
<dbReference type="EnsemblPlants" id="AT3G49940.1">
    <property type="protein sequence ID" value="AT3G49940.1"/>
    <property type="gene ID" value="AT3G49940"/>
</dbReference>
<dbReference type="GeneID" id="824156"/>
<dbReference type="Gramene" id="AT3G49940.1">
    <property type="protein sequence ID" value="AT3G49940.1"/>
    <property type="gene ID" value="AT3G49940"/>
</dbReference>
<dbReference type="KEGG" id="ath:AT3G49940"/>
<dbReference type="Araport" id="AT3G49940"/>
<dbReference type="TAIR" id="AT3G49940">
    <property type="gene designation" value="LBD38"/>
</dbReference>
<dbReference type="eggNOG" id="ENOG502QU8T">
    <property type="taxonomic scope" value="Eukaryota"/>
</dbReference>
<dbReference type="HOGENOM" id="CLU_054665_1_1_1"/>
<dbReference type="InParanoid" id="Q9SN23"/>
<dbReference type="OMA" id="FMDNIAG"/>
<dbReference type="OrthoDB" id="1922547at2759"/>
<dbReference type="PhylomeDB" id="Q9SN23"/>
<dbReference type="PRO" id="PR:Q9SN23"/>
<dbReference type="Proteomes" id="UP000006548">
    <property type="component" value="Chromosome 3"/>
</dbReference>
<dbReference type="ExpressionAtlas" id="Q9SN23">
    <property type="expression patterns" value="baseline and differential"/>
</dbReference>
<dbReference type="InterPro" id="IPR004883">
    <property type="entry name" value="LOB"/>
</dbReference>
<dbReference type="PANTHER" id="PTHR31304">
    <property type="entry name" value="LOB DOMAIN-CONTAINING PROTEIN 38"/>
    <property type="match status" value="1"/>
</dbReference>
<dbReference type="PANTHER" id="PTHR31304:SF68">
    <property type="entry name" value="LOB DOMAIN-CONTAINING PROTEIN 38"/>
    <property type="match status" value="1"/>
</dbReference>
<dbReference type="Pfam" id="PF03195">
    <property type="entry name" value="LOB"/>
    <property type="match status" value="1"/>
</dbReference>
<dbReference type="PROSITE" id="PS50891">
    <property type="entry name" value="LOB"/>
    <property type="match status" value="1"/>
</dbReference>
<protein>
    <recommendedName>
        <fullName>LOB domain-containing protein 38</fullName>
    </recommendedName>
    <alternativeName>
        <fullName>ASYMMETRIC LEAVES 2-like protein 40</fullName>
        <shortName>AS2-like protein 40</shortName>
    </alternativeName>
</protein>
<organism>
    <name type="scientific">Arabidopsis thaliana</name>
    <name type="common">Mouse-ear cress</name>
    <dbReference type="NCBI Taxonomy" id="3702"/>
    <lineage>
        <taxon>Eukaryota</taxon>
        <taxon>Viridiplantae</taxon>
        <taxon>Streptophyta</taxon>
        <taxon>Embryophyta</taxon>
        <taxon>Tracheophyta</taxon>
        <taxon>Spermatophyta</taxon>
        <taxon>Magnoliopsida</taxon>
        <taxon>eudicotyledons</taxon>
        <taxon>Gunneridae</taxon>
        <taxon>Pentapetalae</taxon>
        <taxon>rosids</taxon>
        <taxon>malvids</taxon>
        <taxon>Brassicales</taxon>
        <taxon>Brassicaceae</taxon>
        <taxon>Camelineae</taxon>
        <taxon>Arabidopsis</taxon>
    </lineage>
</organism>
<name>LBD38_ARATH</name>
<sequence length="247" mass="26722">MSCNGCRVLRKGCSENCILRPCIQWIESPEAQGHATVFVAKFFGRAGLMSFISAVPESQCPALFQSLLYEACGRTVNPVNGAVGLLWTGNWNVCQAAVETVLRGGSLKPIPELLNGGGFAGFPSPTSDEASEICTEMLNLRKADDSGDRNIYHHCRFSSSRSRSRSTASPPKRKRLSSEQQPSSELDLSLIPIYPIKTLPFKEDTPSMYSEESVTTVSFQNNNAGDRYVRCGGGGGGATTKLLNLFA</sequence>
<evidence type="ECO:0000255" key="1">
    <source>
        <dbReference type="PROSITE-ProRule" id="PRU00291"/>
    </source>
</evidence>
<evidence type="ECO:0000256" key="2">
    <source>
        <dbReference type="SAM" id="MobiDB-lite"/>
    </source>
</evidence>
<evidence type="ECO:0000269" key="3">
    <source>
    </source>
</evidence>
<evidence type="ECO:0000305" key="4"/>
<keyword id="KW-1185">Reference proteome</keyword>